<gene>
    <name evidence="1" type="primary">nuoB</name>
    <name type="ordered locus">jhp_1182</name>
</gene>
<keyword id="KW-0004">4Fe-4S</keyword>
<keyword id="KW-0997">Cell inner membrane</keyword>
<keyword id="KW-1003">Cell membrane</keyword>
<keyword id="KW-0408">Iron</keyword>
<keyword id="KW-0411">Iron-sulfur</keyword>
<keyword id="KW-0472">Membrane</keyword>
<keyword id="KW-0479">Metal-binding</keyword>
<keyword id="KW-0520">NAD</keyword>
<keyword id="KW-0874">Quinone</keyword>
<keyword id="KW-1278">Translocase</keyword>
<keyword id="KW-0813">Transport</keyword>
<keyword id="KW-0830">Ubiquinone</keyword>
<evidence type="ECO:0000255" key="1">
    <source>
        <dbReference type="HAMAP-Rule" id="MF_01356"/>
    </source>
</evidence>
<proteinExistence type="inferred from homology"/>
<sequence length="159" mass="17823">MQQAPVILSTLDKLLNWGRSNSLWPLTYGLACCAIEMMATGGSRFDFDRFGTIFRASPRQSDVMIIAGTLTKKHAEFMRRLYDQMPEPKWVISMGSCANTGGMFNTYATVQGADRVVPVDIYLPGCAPRPETLQYALMVLQDKIRRSKAIKQDAPKRLV</sequence>
<accession>Q9ZJW6</accession>
<feature type="chain" id="PRO_0000376252" description="NADH-quinone oxidoreductase subunit B">
    <location>
        <begin position="1"/>
        <end position="159"/>
    </location>
</feature>
<feature type="binding site" evidence="1">
    <location>
        <position position="32"/>
    </location>
    <ligand>
        <name>[4Fe-4S] cluster</name>
        <dbReference type="ChEBI" id="CHEBI:49883"/>
    </ligand>
</feature>
<feature type="binding site" evidence="1">
    <location>
        <position position="33"/>
    </location>
    <ligand>
        <name>[4Fe-4S] cluster</name>
        <dbReference type="ChEBI" id="CHEBI:49883"/>
    </ligand>
</feature>
<feature type="binding site" evidence="1">
    <location>
        <position position="97"/>
    </location>
    <ligand>
        <name>[4Fe-4S] cluster</name>
        <dbReference type="ChEBI" id="CHEBI:49883"/>
    </ligand>
</feature>
<feature type="binding site" evidence="1">
    <location>
        <position position="126"/>
    </location>
    <ligand>
        <name>[4Fe-4S] cluster</name>
        <dbReference type="ChEBI" id="CHEBI:49883"/>
    </ligand>
</feature>
<name>NUOB_HELPJ</name>
<reference key="1">
    <citation type="journal article" date="1999" name="Nature">
        <title>Genomic sequence comparison of two unrelated isolates of the human gastric pathogen Helicobacter pylori.</title>
        <authorList>
            <person name="Alm R.A."/>
            <person name="Ling L.-S.L."/>
            <person name="Moir D.T."/>
            <person name="King B.L."/>
            <person name="Brown E.D."/>
            <person name="Doig P.C."/>
            <person name="Smith D.R."/>
            <person name="Noonan B."/>
            <person name="Guild B.C."/>
            <person name="deJonge B.L."/>
            <person name="Carmel G."/>
            <person name="Tummino P.J."/>
            <person name="Caruso A."/>
            <person name="Uria-Nickelsen M."/>
            <person name="Mills D.M."/>
            <person name="Ives C."/>
            <person name="Gibson R."/>
            <person name="Merberg D."/>
            <person name="Mills S.D."/>
            <person name="Jiang Q."/>
            <person name="Taylor D.E."/>
            <person name="Vovis G.F."/>
            <person name="Trust T.J."/>
        </authorList>
    </citation>
    <scope>NUCLEOTIDE SEQUENCE [LARGE SCALE GENOMIC DNA]</scope>
    <source>
        <strain>J99 / ATCC 700824</strain>
    </source>
</reference>
<comment type="function">
    <text evidence="1">NDH-1 shuttles electrons from NADH, via FMN and iron-sulfur (Fe-S) centers, to quinones in the respiratory chain. The immediate electron acceptor for the enzyme in this species is believed to be ubiquinone. Couples the redox reaction to proton translocation (for every two electrons transferred, four hydrogen ions are translocated across the cytoplasmic membrane), and thus conserves the redox energy in a proton gradient.</text>
</comment>
<comment type="catalytic activity">
    <reaction evidence="1">
        <text>a quinone + NADH + 5 H(+)(in) = a quinol + NAD(+) + 4 H(+)(out)</text>
        <dbReference type="Rhea" id="RHEA:57888"/>
        <dbReference type="ChEBI" id="CHEBI:15378"/>
        <dbReference type="ChEBI" id="CHEBI:24646"/>
        <dbReference type="ChEBI" id="CHEBI:57540"/>
        <dbReference type="ChEBI" id="CHEBI:57945"/>
        <dbReference type="ChEBI" id="CHEBI:132124"/>
    </reaction>
</comment>
<comment type="cofactor">
    <cofactor evidence="1">
        <name>[4Fe-4S] cluster</name>
        <dbReference type="ChEBI" id="CHEBI:49883"/>
    </cofactor>
    <text evidence="1">Binds 1 [4Fe-4S] cluster.</text>
</comment>
<comment type="subunit">
    <text evidence="1">NDH-1 is composed of 14 different subunits. Subunits NuoB, C, D, E, F, and G constitute the peripheral sector of the complex.</text>
</comment>
<comment type="subcellular location">
    <subcellularLocation>
        <location evidence="1">Cell inner membrane</location>
        <topology evidence="1">Peripheral membrane protein</topology>
        <orientation evidence="1">Cytoplasmic side</orientation>
    </subcellularLocation>
</comment>
<comment type="similarity">
    <text evidence="1">Belongs to the complex I 20 kDa subunit family.</text>
</comment>
<organism>
    <name type="scientific">Helicobacter pylori (strain J99 / ATCC 700824)</name>
    <name type="common">Campylobacter pylori J99</name>
    <dbReference type="NCBI Taxonomy" id="85963"/>
    <lineage>
        <taxon>Bacteria</taxon>
        <taxon>Pseudomonadati</taxon>
        <taxon>Campylobacterota</taxon>
        <taxon>Epsilonproteobacteria</taxon>
        <taxon>Campylobacterales</taxon>
        <taxon>Helicobacteraceae</taxon>
        <taxon>Helicobacter</taxon>
    </lineage>
</organism>
<protein>
    <recommendedName>
        <fullName evidence="1">NADH-quinone oxidoreductase subunit B</fullName>
        <ecNumber evidence="1">7.1.1.-</ecNumber>
    </recommendedName>
    <alternativeName>
        <fullName evidence="1">NADH dehydrogenase I subunit B</fullName>
    </alternativeName>
    <alternativeName>
        <fullName evidence="1">NDH-1 subunit B</fullName>
    </alternativeName>
</protein>
<dbReference type="EC" id="7.1.1.-" evidence="1"/>
<dbReference type="EMBL" id="AE001439">
    <property type="protein sequence ID" value="AAD06768.1"/>
    <property type="molecule type" value="Genomic_DNA"/>
</dbReference>
<dbReference type="PIR" id="C71838">
    <property type="entry name" value="C71838"/>
</dbReference>
<dbReference type="RefSeq" id="WP_001183503.1">
    <property type="nucleotide sequence ID" value="NZ_CP011330.1"/>
</dbReference>
<dbReference type="SMR" id="Q9ZJW6"/>
<dbReference type="KEGG" id="hpj:jhp_1182"/>
<dbReference type="PATRIC" id="fig|85963.30.peg.1390"/>
<dbReference type="eggNOG" id="COG0377">
    <property type="taxonomic scope" value="Bacteria"/>
</dbReference>
<dbReference type="Proteomes" id="UP000000804">
    <property type="component" value="Chromosome"/>
</dbReference>
<dbReference type="GO" id="GO:0005886">
    <property type="term" value="C:plasma membrane"/>
    <property type="evidence" value="ECO:0007669"/>
    <property type="project" value="UniProtKB-SubCell"/>
</dbReference>
<dbReference type="GO" id="GO:0045271">
    <property type="term" value="C:respiratory chain complex I"/>
    <property type="evidence" value="ECO:0007669"/>
    <property type="project" value="TreeGrafter"/>
</dbReference>
<dbReference type="GO" id="GO:0051539">
    <property type="term" value="F:4 iron, 4 sulfur cluster binding"/>
    <property type="evidence" value="ECO:0007669"/>
    <property type="project" value="UniProtKB-KW"/>
</dbReference>
<dbReference type="GO" id="GO:0005506">
    <property type="term" value="F:iron ion binding"/>
    <property type="evidence" value="ECO:0007669"/>
    <property type="project" value="UniProtKB-UniRule"/>
</dbReference>
<dbReference type="GO" id="GO:0008137">
    <property type="term" value="F:NADH dehydrogenase (ubiquinone) activity"/>
    <property type="evidence" value="ECO:0007669"/>
    <property type="project" value="InterPro"/>
</dbReference>
<dbReference type="GO" id="GO:0050136">
    <property type="term" value="F:NADH:ubiquinone reductase (non-electrogenic) activity"/>
    <property type="evidence" value="ECO:0007669"/>
    <property type="project" value="UniProtKB-UniRule"/>
</dbReference>
<dbReference type="GO" id="GO:0048038">
    <property type="term" value="F:quinone binding"/>
    <property type="evidence" value="ECO:0007669"/>
    <property type="project" value="UniProtKB-KW"/>
</dbReference>
<dbReference type="GO" id="GO:0009060">
    <property type="term" value="P:aerobic respiration"/>
    <property type="evidence" value="ECO:0007669"/>
    <property type="project" value="TreeGrafter"/>
</dbReference>
<dbReference type="GO" id="GO:0015990">
    <property type="term" value="P:electron transport coupled proton transport"/>
    <property type="evidence" value="ECO:0007669"/>
    <property type="project" value="TreeGrafter"/>
</dbReference>
<dbReference type="FunFam" id="3.40.50.12280:FF:000002">
    <property type="entry name" value="NADH-quinone oxidoreductase subunit B"/>
    <property type="match status" value="1"/>
</dbReference>
<dbReference type="Gene3D" id="3.40.50.12280">
    <property type="match status" value="1"/>
</dbReference>
<dbReference type="HAMAP" id="MF_01356">
    <property type="entry name" value="NDH1_NuoB"/>
    <property type="match status" value="1"/>
</dbReference>
<dbReference type="InterPro" id="IPR006137">
    <property type="entry name" value="NADH_UbQ_OxRdtase-like_20kDa"/>
</dbReference>
<dbReference type="InterPro" id="IPR006138">
    <property type="entry name" value="NADH_UQ_OxRdtase_20Kd_su"/>
</dbReference>
<dbReference type="NCBIfam" id="TIGR01957">
    <property type="entry name" value="nuoB_fam"/>
    <property type="match status" value="1"/>
</dbReference>
<dbReference type="NCBIfam" id="NF005012">
    <property type="entry name" value="PRK06411.1"/>
    <property type="match status" value="1"/>
</dbReference>
<dbReference type="PANTHER" id="PTHR11995">
    <property type="entry name" value="NADH DEHYDROGENASE"/>
    <property type="match status" value="1"/>
</dbReference>
<dbReference type="PANTHER" id="PTHR11995:SF14">
    <property type="entry name" value="NADH DEHYDROGENASE [UBIQUINONE] IRON-SULFUR PROTEIN 7, MITOCHONDRIAL"/>
    <property type="match status" value="1"/>
</dbReference>
<dbReference type="Pfam" id="PF01058">
    <property type="entry name" value="Oxidored_q6"/>
    <property type="match status" value="1"/>
</dbReference>
<dbReference type="SUPFAM" id="SSF56770">
    <property type="entry name" value="HydA/Nqo6-like"/>
    <property type="match status" value="1"/>
</dbReference>